<name>PURL_LACLA</name>
<dbReference type="EC" id="6.3.5.3" evidence="1"/>
<dbReference type="EMBL" id="AE005176">
    <property type="protein sequence ID" value="AAK05628.1"/>
    <property type="molecule type" value="Genomic_DNA"/>
</dbReference>
<dbReference type="PIR" id="B86816">
    <property type="entry name" value="B86816"/>
</dbReference>
<dbReference type="RefSeq" id="NP_267686.1">
    <property type="nucleotide sequence ID" value="NC_002662.1"/>
</dbReference>
<dbReference type="RefSeq" id="WP_003130033.1">
    <property type="nucleotide sequence ID" value="NC_002662.1"/>
</dbReference>
<dbReference type="SMR" id="Q9CFE8"/>
<dbReference type="PaxDb" id="272623-L173921"/>
<dbReference type="EnsemblBacteria" id="AAK05628">
    <property type="protein sequence ID" value="AAK05628"/>
    <property type="gene ID" value="L173921"/>
</dbReference>
<dbReference type="KEGG" id="lla:L173921"/>
<dbReference type="PATRIC" id="fig|272623.7.peg.1641"/>
<dbReference type="eggNOG" id="COG0046">
    <property type="taxonomic scope" value="Bacteria"/>
</dbReference>
<dbReference type="HOGENOM" id="CLU_003100_0_1_9"/>
<dbReference type="OrthoDB" id="9804441at2"/>
<dbReference type="UniPathway" id="UPA00074">
    <property type="reaction ID" value="UER00128"/>
</dbReference>
<dbReference type="Proteomes" id="UP000002196">
    <property type="component" value="Chromosome"/>
</dbReference>
<dbReference type="GO" id="GO:0005737">
    <property type="term" value="C:cytoplasm"/>
    <property type="evidence" value="ECO:0007669"/>
    <property type="project" value="UniProtKB-SubCell"/>
</dbReference>
<dbReference type="GO" id="GO:0005524">
    <property type="term" value="F:ATP binding"/>
    <property type="evidence" value="ECO:0007669"/>
    <property type="project" value="UniProtKB-UniRule"/>
</dbReference>
<dbReference type="GO" id="GO:0000287">
    <property type="term" value="F:magnesium ion binding"/>
    <property type="evidence" value="ECO:0007669"/>
    <property type="project" value="UniProtKB-UniRule"/>
</dbReference>
<dbReference type="GO" id="GO:0004642">
    <property type="term" value="F:phosphoribosylformylglycinamidine synthase activity"/>
    <property type="evidence" value="ECO:0007669"/>
    <property type="project" value="UniProtKB-UniRule"/>
</dbReference>
<dbReference type="GO" id="GO:0006189">
    <property type="term" value="P:'de novo' IMP biosynthetic process"/>
    <property type="evidence" value="ECO:0007669"/>
    <property type="project" value="UniProtKB-UniRule"/>
</dbReference>
<dbReference type="CDD" id="cd02203">
    <property type="entry name" value="PurL_repeat1"/>
    <property type="match status" value="1"/>
</dbReference>
<dbReference type="CDD" id="cd02204">
    <property type="entry name" value="PurL_repeat2"/>
    <property type="match status" value="1"/>
</dbReference>
<dbReference type="FunFam" id="3.30.1330.10:FF:000004">
    <property type="entry name" value="Phosphoribosylformylglycinamidine synthase subunit PurL"/>
    <property type="match status" value="1"/>
</dbReference>
<dbReference type="FunFam" id="3.90.650.10:FF:000009">
    <property type="entry name" value="Phosphoribosylformylglycinamidine synthase subunit PurL"/>
    <property type="match status" value="1"/>
</dbReference>
<dbReference type="Gene3D" id="3.90.650.10">
    <property type="entry name" value="PurM-like C-terminal domain"/>
    <property type="match status" value="2"/>
</dbReference>
<dbReference type="Gene3D" id="3.30.1330.10">
    <property type="entry name" value="PurM-like, N-terminal domain"/>
    <property type="match status" value="2"/>
</dbReference>
<dbReference type="HAMAP" id="MF_00420">
    <property type="entry name" value="PurL_2"/>
    <property type="match status" value="1"/>
</dbReference>
<dbReference type="InterPro" id="IPR010074">
    <property type="entry name" value="PRibForGlyAmidine_synth_PurL"/>
</dbReference>
<dbReference type="InterPro" id="IPR041609">
    <property type="entry name" value="PurL_linker"/>
</dbReference>
<dbReference type="InterPro" id="IPR010918">
    <property type="entry name" value="PurM-like_C_dom"/>
</dbReference>
<dbReference type="InterPro" id="IPR036676">
    <property type="entry name" value="PurM-like_C_sf"/>
</dbReference>
<dbReference type="InterPro" id="IPR016188">
    <property type="entry name" value="PurM-like_N"/>
</dbReference>
<dbReference type="InterPro" id="IPR036921">
    <property type="entry name" value="PurM-like_N_sf"/>
</dbReference>
<dbReference type="NCBIfam" id="TIGR01736">
    <property type="entry name" value="FGAM_synth_II"/>
    <property type="match status" value="1"/>
</dbReference>
<dbReference type="NCBIfam" id="NF002290">
    <property type="entry name" value="PRK01213.1"/>
    <property type="match status" value="1"/>
</dbReference>
<dbReference type="PANTHER" id="PTHR43555">
    <property type="entry name" value="PHOSPHORIBOSYLFORMYLGLYCINAMIDINE SYNTHASE SUBUNIT PURL"/>
    <property type="match status" value="1"/>
</dbReference>
<dbReference type="PANTHER" id="PTHR43555:SF1">
    <property type="entry name" value="PHOSPHORIBOSYLFORMYLGLYCINAMIDINE SYNTHASE SUBUNIT PURL"/>
    <property type="match status" value="1"/>
</dbReference>
<dbReference type="Pfam" id="PF00586">
    <property type="entry name" value="AIRS"/>
    <property type="match status" value="2"/>
</dbReference>
<dbReference type="Pfam" id="PF02769">
    <property type="entry name" value="AIRS_C"/>
    <property type="match status" value="2"/>
</dbReference>
<dbReference type="Pfam" id="PF18072">
    <property type="entry name" value="FGAR-AT_linker"/>
    <property type="match status" value="1"/>
</dbReference>
<dbReference type="PIRSF" id="PIRSF001587">
    <property type="entry name" value="FGAM_synthase_II"/>
    <property type="match status" value="1"/>
</dbReference>
<dbReference type="SUPFAM" id="SSF56042">
    <property type="entry name" value="PurM C-terminal domain-like"/>
    <property type="match status" value="2"/>
</dbReference>
<dbReference type="SUPFAM" id="SSF55326">
    <property type="entry name" value="PurM N-terminal domain-like"/>
    <property type="match status" value="2"/>
</dbReference>
<accession>Q9CFE8</accession>
<gene>
    <name evidence="1" type="primary">purL</name>
    <name type="ordered locus">LL1530</name>
    <name type="ORF">L173921</name>
</gene>
<proteinExistence type="inferred from homology"/>
<comment type="function">
    <text evidence="1">Part of the phosphoribosylformylglycinamidine synthase complex involved in the purines biosynthetic pathway. Catalyzes the ATP-dependent conversion of formylglycinamide ribonucleotide (FGAR) and glutamine to yield formylglycinamidine ribonucleotide (FGAM) and glutamate. The FGAM synthase complex is composed of three subunits. PurQ produces an ammonia molecule by converting glutamine to glutamate. PurL transfers the ammonia molecule to FGAR to form FGAM in an ATP-dependent manner. PurS interacts with PurQ and PurL and is thought to assist in the transfer of the ammonia molecule from PurQ to PurL.</text>
</comment>
<comment type="catalytic activity">
    <reaction evidence="1">
        <text>N(2)-formyl-N(1)-(5-phospho-beta-D-ribosyl)glycinamide + L-glutamine + ATP + H2O = 2-formamido-N(1)-(5-O-phospho-beta-D-ribosyl)acetamidine + L-glutamate + ADP + phosphate + H(+)</text>
        <dbReference type="Rhea" id="RHEA:17129"/>
        <dbReference type="ChEBI" id="CHEBI:15377"/>
        <dbReference type="ChEBI" id="CHEBI:15378"/>
        <dbReference type="ChEBI" id="CHEBI:29985"/>
        <dbReference type="ChEBI" id="CHEBI:30616"/>
        <dbReference type="ChEBI" id="CHEBI:43474"/>
        <dbReference type="ChEBI" id="CHEBI:58359"/>
        <dbReference type="ChEBI" id="CHEBI:147286"/>
        <dbReference type="ChEBI" id="CHEBI:147287"/>
        <dbReference type="ChEBI" id="CHEBI:456216"/>
        <dbReference type="EC" id="6.3.5.3"/>
    </reaction>
</comment>
<comment type="pathway">
    <text evidence="1">Purine metabolism; IMP biosynthesis via de novo pathway; 5-amino-1-(5-phospho-D-ribosyl)imidazole from N(2)-formyl-N(1)-(5-phospho-D-ribosyl)glycinamide: step 1/2.</text>
</comment>
<comment type="subunit">
    <text evidence="1">Monomer. Part of the FGAM synthase complex composed of 1 PurL, 1 PurQ and 2 PurS subunits.</text>
</comment>
<comment type="subcellular location">
    <subcellularLocation>
        <location evidence="1">Cytoplasm</location>
    </subcellularLocation>
</comment>
<comment type="similarity">
    <text evidence="1">Belongs to the FGAMS family.</text>
</comment>
<keyword id="KW-0067">ATP-binding</keyword>
<keyword id="KW-0963">Cytoplasm</keyword>
<keyword id="KW-0436">Ligase</keyword>
<keyword id="KW-0460">Magnesium</keyword>
<keyword id="KW-0479">Metal-binding</keyword>
<keyword id="KW-0547">Nucleotide-binding</keyword>
<keyword id="KW-0658">Purine biosynthesis</keyword>
<keyword id="KW-1185">Reference proteome</keyword>
<protein>
    <recommendedName>
        <fullName evidence="1">Phosphoribosylformylglycinamidine synthase subunit PurL</fullName>
        <shortName evidence="1">FGAM synthase</shortName>
        <ecNumber evidence="1">6.3.5.3</ecNumber>
    </recommendedName>
    <alternativeName>
        <fullName evidence="1">Formylglycinamide ribonucleotide amidotransferase subunit II</fullName>
        <shortName evidence="1">FGAR amidotransferase II</shortName>
        <shortName evidence="1">FGAR-AT II</shortName>
    </alternativeName>
    <alternativeName>
        <fullName evidence="1">Glutamine amidotransferase PurL</fullName>
    </alternativeName>
    <alternativeName>
        <fullName evidence="1">Phosphoribosylformylglycinamidine synthase subunit II</fullName>
    </alternativeName>
</protein>
<organism>
    <name type="scientific">Lactococcus lactis subsp. lactis (strain IL1403)</name>
    <name type="common">Streptococcus lactis</name>
    <dbReference type="NCBI Taxonomy" id="272623"/>
    <lineage>
        <taxon>Bacteria</taxon>
        <taxon>Bacillati</taxon>
        <taxon>Bacillota</taxon>
        <taxon>Bacilli</taxon>
        <taxon>Lactobacillales</taxon>
        <taxon>Streptococcaceae</taxon>
        <taxon>Lactococcus</taxon>
    </lineage>
</organism>
<sequence length="739" mass="79695">MTLEMSPEQIQESKIYREWGLTDEEYLKIKDEILDGRLPNFTETGMYAVMWSEHCCYKNSKPVLKKFPTTGPQVLMGPGEGAGVVDIGDDLAVVFKAESHNHPSYVEPYEGAATGSGGIIRDIFSMGARPIAILDSLRFGPIDNGKTRHIVDQVTAGIAGYGNCIGIPTVGGEVAFDESYAGNPLVNVMCVGLIEHKHIQKGQAKGVGNSIFYVGAKTGRDGIHGASFASKEFGSGSETQRSAVQVGDPFMEKLLLEACIEVIQNHGDILVGIQDMGAAGLVSSTSEMASKAGSGLRLNLDNVPQRETEMIPYEMMLSESQERMVLCVKKGHEQEIIDLFKKYDLDAVNIGQVTDDGFYTLYHKGEMVAHVPVDSLAEDAPTYYREAKVPERIQKFTDSEKYLPEITDSAVSEIFKKLLAQPTIASKKSIYETYDSRVMTNTVVAPGSDSAVLRVRGTNKALAMTTDCNARYLYLDPEKGGAIAVAEAARNIVASGGKPLAITDCLNFGNPEKPEQFWELTTAADGISRSCLALDTPVISGNVSLYNETNGSAILPTPMIGMVGLIENVKNITTQEFKKAGDLIVLVGQTFDDFSGSELQKMLIGEISGRIDFDLETEKINQDFVLKAITDGLVSSAHDLAEGGLAIALAESAFANGLGVDVKVDITNAQLFSETQGRFILSISPENQATFEKLLTESSVSGEVIGKVTDSGILEMNELSISTDEAVSIYEGALPALMK</sequence>
<evidence type="ECO:0000255" key="1">
    <source>
        <dbReference type="HAMAP-Rule" id="MF_00420"/>
    </source>
</evidence>
<feature type="chain" id="PRO_0000100461" description="Phosphoribosylformylglycinamidine synthase subunit PurL">
    <location>
        <begin position="1"/>
        <end position="739"/>
    </location>
</feature>
<feature type="active site" evidence="1">
    <location>
        <position position="54"/>
    </location>
</feature>
<feature type="active site" description="Proton acceptor" evidence="1">
    <location>
        <position position="100"/>
    </location>
</feature>
<feature type="binding site" evidence="1">
    <location>
        <position position="57"/>
    </location>
    <ligand>
        <name>ATP</name>
        <dbReference type="ChEBI" id="CHEBI:30616"/>
    </ligand>
</feature>
<feature type="binding site" evidence="1">
    <location>
        <position position="96"/>
    </location>
    <ligand>
        <name>ATP</name>
        <dbReference type="ChEBI" id="CHEBI:30616"/>
    </ligand>
</feature>
<feature type="binding site" evidence="1">
    <location>
        <position position="98"/>
    </location>
    <ligand>
        <name>Mg(2+)</name>
        <dbReference type="ChEBI" id="CHEBI:18420"/>
        <label>1</label>
    </ligand>
</feature>
<feature type="binding site" evidence="1">
    <location>
        <begin position="99"/>
        <end position="102"/>
    </location>
    <ligand>
        <name>substrate</name>
    </ligand>
</feature>
<feature type="binding site" evidence="1">
    <location>
        <position position="121"/>
    </location>
    <ligand>
        <name>substrate</name>
    </ligand>
</feature>
<feature type="binding site" evidence="1">
    <location>
        <position position="122"/>
    </location>
    <ligand>
        <name>Mg(2+)</name>
        <dbReference type="ChEBI" id="CHEBI:18420"/>
        <label>2</label>
    </ligand>
</feature>
<feature type="binding site" evidence="1">
    <location>
        <position position="245"/>
    </location>
    <ligand>
        <name>substrate</name>
    </ligand>
</feature>
<feature type="binding site" evidence="1">
    <location>
        <position position="275"/>
    </location>
    <ligand>
        <name>Mg(2+)</name>
        <dbReference type="ChEBI" id="CHEBI:18420"/>
        <label>2</label>
    </ligand>
</feature>
<feature type="binding site" evidence="1">
    <location>
        <begin position="319"/>
        <end position="321"/>
    </location>
    <ligand>
        <name>substrate</name>
    </ligand>
</feature>
<feature type="binding site" evidence="1">
    <location>
        <position position="504"/>
    </location>
    <ligand>
        <name>ATP</name>
        <dbReference type="ChEBI" id="CHEBI:30616"/>
    </ligand>
</feature>
<feature type="binding site" evidence="1">
    <location>
        <position position="541"/>
    </location>
    <ligand>
        <name>ATP</name>
        <dbReference type="ChEBI" id="CHEBI:30616"/>
    </ligand>
</feature>
<feature type="binding site" evidence="1">
    <location>
        <position position="542"/>
    </location>
    <ligand>
        <name>Mg(2+)</name>
        <dbReference type="ChEBI" id="CHEBI:18420"/>
        <label>1</label>
    </ligand>
</feature>
<feature type="binding site" evidence="1">
    <location>
        <position position="544"/>
    </location>
    <ligand>
        <name>substrate</name>
    </ligand>
</feature>
<reference key="1">
    <citation type="journal article" date="2001" name="Genome Res.">
        <title>The complete genome sequence of the lactic acid bacterium Lactococcus lactis ssp. lactis IL1403.</title>
        <authorList>
            <person name="Bolotin A."/>
            <person name="Wincker P."/>
            <person name="Mauger S."/>
            <person name="Jaillon O."/>
            <person name="Malarme K."/>
            <person name="Weissenbach J."/>
            <person name="Ehrlich S.D."/>
            <person name="Sorokin A."/>
        </authorList>
    </citation>
    <scope>NUCLEOTIDE SEQUENCE [LARGE SCALE GENOMIC DNA]</scope>
    <source>
        <strain>IL1403</strain>
    </source>
</reference>